<reference key="1">
    <citation type="submission" date="2005-09" db="EMBL/GenBank/DDBJ databases">
        <title>Complete sequence of chromosome 2 of Rhodobacter sphaeroides 2.4.1.</title>
        <authorList>
            <person name="Copeland A."/>
            <person name="Lucas S."/>
            <person name="Lapidus A."/>
            <person name="Barry K."/>
            <person name="Detter J.C."/>
            <person name="Glavina T."/>
            <person name="Hammon N."/>
            <person name="Israni S."/>
            <person name="Pitluck S."/>
            <person name="Richardson P."/>
            <person name="Mackenzie C."/>
            <person name="Choudhary M."/>
            <person name="Larimer F."/>
            <person name="Hauser L.J."/>
            <person name="Land M."/>
            <person name="Donohue T.J."/>
            <person name="Kaplan S."/>
        </authorList>
    </citation>
    <scope>NUCLEOTIDE SEQUENCE [LARGE SCALE GENOMIC DNA]</scope>
    <source>
        <strain>ATCC 17023 / DSM 158 / JCM 6121 / CCUG 31486 / LMG 2827 / NBRC 12203 / NCIMB 8253 / ATH 2.4.1.</strain>
    </source>
</reference>
<proteinExistence type="inferred from homology"/>
<accession>Q3IXC2</accession>
<protein>
    <recommendedName>
        <fullName evidence="1">Ion-translocating oxidoreductase complex subunit G</fullName>
        <ecNumber evidence="1">7.-.-.-</ecNumber>
    </recommendedName>
    <alternativeName>
        <fullName evidence="1">Rnf electron transport complex subunit G</fullName>
    </alternativeName>
</protein>
<evidence type="ECO:0000255" key="1">
    <source>
        <dbReference type="HAMAP-Rule" id="MF_00479"/>
    </source>
</evidence>
<keyword id="KW-0249">Electron transport</keyword>
<keyword id="KW-0285">Flavoprotein</keyword>
<keyword id="KW-0288">FMN</keyword>
<keyword id="KW-0472">Membrane</keyword>
<keyword id="KW-0535">Nitrogen fixation</keyword>
<keyword id="KW-0597">Phosphoprotein</keyword>
<keyword id="KW-1185">Reference proteome</keyword>
<keyword id="KW-1278">Translocase</keyword>
<keyword id="KW-0812">Transmembrane</keyword>
<keyword id="KW-1133">Transmembrane helix</keyword>
<keyword id="KW-0813">Transport</keyword>
<name>RNFG_CERS4</name>
<comment type="function">
    <text evidence="1">Part of a membrane-bound complex that couples electron transfer with translocation of ions across the membrane.</text>
</comment>
<comment type="cofactor">
    <cofactor evidence="1">
        <name>FMN</name>
        <dbReference type="ChEBI" id="CHEBI:58210"/>
    </cofactor>
</comment>
<comment type="subunit">
    <text evidence="1">The complex is composed of six subunits: RnfA, RnfB, RnfC, RnfD, RnfE and RnfG.</text>
</comment>
<comment type="subcellular location">
    <subcellularLocation>
        <location evidence="1">Cellular chromatophore membrane</location>
        <topology evidence="1">Single-pass membrane protein</topology>
    </subcellularLocation>
</comment>
<comment type="similarity">
    <text evidence="1">Belongs to the RnfG family.</text>
</comment>
<dbReference type="EC" id="7.-.-.-" evidence="1"/>
<dbReference type="EMBL" id="CP000144">
    <property type="protein sequence ID" value="ABA80812.1"/>
    <property type="molecule type" value="Genomic_DNA"/>
</dbReference>
<dbReference type="RefSeq" id="WP_011339119.1">
    <property type="nucleotide sequence ID" value="NC_007494.2"/>
</dbReference>
<dbReference type="RefSeq" id="YP_354713.1">
    <property type="nucleotide sequence ID" value="NC_007494.2"/>
</dbReference>
<dbReference type="SMR" id="Q3IXC2"/>
<dbReference type="STRING" id="272943.RSP_3196"/>
<dbReference type="EnsemblBacteria" id="ABA80812">
    <property type="protein sequence ID" value="ABA80812"/>
    <property type="gene ID" value="RSP_3196"/>
</dbReference>
<dbReference type="GeneID" id="3721804"/>
<dbReference type="KEGG" id="rsp:RSP_3196"/>
<dbReference type="PATRIC" id="fig|272943.9.peg.3626"/>
<dbReference type="eggNOG" id="COG4659">
    <property type="taxonomic scope" value="Bacteria"/>
</dbReference>
<dbReference type="OrthoDB" id="9784165at2"/>
<dbReference type="PhylomeDB" id="Q3IXC2"/>
<dbReference type="Proteomes" id="UP000002703">
    <property type="component" value="Chromosome 2"/>
</dbReference>
<dbReference type="GO" id="GO:0005886">
    <property type="term" value="C:plasma membrane"/>
    <property type="evidence" value="ECO:0007669"/>
    <property type="project" value="InterPro"/>
</dbReference>
<dbReference type="GO" id="GO:0042717">
    <property type="term" value="C:plasma membrane-derived chromatophore membrane"/>
    <property type="evidence" value="ECO:0007669"/>
    <property type="project" value="UniProtKB-SubCell"/>
</dbReference>
<dbReference type="GO" id="GO:0009055">
    <property type="term" value="F:electron transfer activity"/>
    <property type="evidence" value="ECO:0007669"/>
    <property type="project" value="InterPro"/>
</dbReference>
<dbReference type="GO" id="GO:0010181">
    <property type="term" value="F:FMN binding"/>
    <property type="evidence" value="ECO:0007669"/>
    <property type="project" value="InterPro"/>
</dbReference>
<dbReference type="GO" id="GO:0022900">
    <property type="term" value="P:electron transport chain"/>
    <property type="evidence" value="ECO:0007669"/>
    <property type="project" value="UniProtKB-UniRule"/>
</dbReference>
<dbReference type="GO" id="GO:0009399">
    <property type="term" value="P:nitrogen fixation"/>
    <property type="evidence" value="ECO:0007669"/>
    <property type="project" value="UniProtKB-UniRule"/>
</dbReference>
<dbReference type="HAMAP" id="MF_00479">
    <property type="entry name" value="RsxG_RnfG"/>
    <property type="match status" value="1"/>
</dbReference>
<dbReference type="InterPro" id="IPR007329">
    <property type="entry name" value="FMN-bd"/>
</dbReference>
<dbReference type="InterPro" id="IPR010209">
    <property type="entry name" value="Ion_transpt_RnfG/RsxG"/>
</dbReference>
<dbReference type="NCBIfam" id="NF002519">
    <property type="entry name" value="PRK01908.1"/>
    <property type="match status" value="1"/>
</dbReference>
<dbReference type="NCBIfam" id="TIGR01947">
    <property type="entry name" value="rnfG"/>
    <property type="match status" value="1"/>
</dbReference>
<dbReference type="PANTHER" id="PTHR36118">
    <property type="entry name" value="ION-TRANSLOCATING OXIDOREDUCTASE COMPLEX SUBUNIT G"/>
    <property type="match status" value="1"/>
</dbReference>
<dbReference type="PANTHER" id="PTHR36118:SF1">
    <property type="entry name" value="ION-TRANSLOCATING OXIDOREDUCTASE COMPLEX SUBUNIT G"/>
    <property type="match status" value="1"/>
</dbReference>
<dbReference type="Pfam" id="PF04205">
    <property type="entry name" value="FMN_bind"/>
    <property type="match status" value="1"/>
</dbReference>
<dbReference type="PIRSF" id="PIRSF006091">
    <property type="entry name" value="E_trnsport_RnfG"/>
    <property type="match status" value="1"/>
</dbReference>
<dbReference type="SMART" id="SM00900">
    <property type="entry name" value="FMN_bind"/>
    <property type="match status" value="1"/>
</dbReference>
<sequence>MTDDTAAPPPRGPARDWKSSPLVSGLLLGLFSLVSALMLALASDATRGPIAARSAEDLLASLAQVLPETLHDNDPTADIRTLSDADEGAVRVYVAARGGAVTAVTFELTGYGYGGAIRVLMAVAADGTILGARVLSHTETPGLGDKIEIGKDDWIEGFAGRSLTDPGPAGWKVRRDGGVFDQFSGATITPRAVVGTIHRGLTLFDRHRAELLAPLPPRS</sequence>
<feature type="chain" id="PRO_1000014126" description="Ion-translocating oxidoreductase complex subunit G">
    <location>
        <begin position="1"/>
        <end position="219"/>
    </location>
</feature>
<feature type="transmembrane region" description="Helical" evidence="1">
    <location>
        <begin position="25"/>
        <end position="45"/>
    </location>
</feature>
<feature type="modified residue" description="FMN phosphoryl threonine" evidence="1">
    <location>
        <position position="187"/>
    </location>
</feature>
<organism>
    <name type="scientific">Cereibacter sphaeroides (strain ATCC 17023 / DSM 158 / JCM 6121 / CCUG 31486 / LMG 2827 / NBRC 12203 / NCIMB 8253 / ATH 2.4.1.)</name>
    <name type="common">Rhodobacter sphaeroides</name>
    <dbReference type="NCBI Taxonomy" id="272943"/>
    <lineage>
        <taxon>Bacteria</taxon>
        <taxon>Pseudomonadati</taxon>
        <taxon>Pseudomonadota</taxon>
        <taxon>Alphaproteobacteria</taxon>
        <taxon>Rhodobacterales</taxon>
        <taxon>Paracoccaceae</taxon>
        <taxon>Cereibacter</taxon>
    </lineage>
</organism>
<gene>
    <name evidence="1" type="primary">rnfG</name>
    <name type="ordered locus">RHOS4_32440</name>
    <name type="ordered locus">RSP_3196</name>
</gene>